<sequence>MSDKRRYFGTDGVRGKVGQYPITPDFVLKLGWAAGRVLAKQGTKKVIIGKDTRISGYMLESALEAGLAAAGLKATFTGPMPTPAVAYLTQTFRAEAGIVISASHNPYYDNGIKFFSSEGTKLPDDIELAIEAELDKEIECVESAELGKATRLNDAAGRYIEFCKSTFPSELSLAKLKIVVDCANGATYHIAPNVFTELGADVIAMGVTPNGTNINHEVGATDVRALQQRVVEEQADLGLAFDGDGDRIIMVDHLGNKVDGDQIAYIIARDALRRGELKGGVVGTLMTNLGMENGLKQLGIPFVRAAVGDRYVMEKLLEKGWKIGAENSGHVILLDKVTTGDAIVAALQVLASVVGSELSLNELSKGMTLYPQVLENVRFAGQGNPLEAEAVKKAVEEVEADLGSKGRVLLRKSGTEPLIRVMVEGEDGELVQNSALKIAQAVKDNC</sequence>
<proteinExistence type="inferred from homology"/>
<feature type="chain" id="PRO_0000148000" description="Phosphoglucosamine mutase">
    <location>
        <begin position="1"/>
        <end position="446"/>
    </location>
</feature>
<feature type="active site" description="Phosphoserine intermediate" evidence="1">
    <location>
        <position position="103"/>
    </location>
</feature>
<feature type="binding site" description="via phosphate group" evidence="1">
    <location>
        <position position="103"/>
    </location>
    <ligand>
        <name>Mg(2+)</name>
        <dbReference type="ChEBI" id="CHEBI:18420"/>
    </ligand>
</feature>
<feature type="binding site" evidence="1">
    <location>
        <position position="242"/>
    </location>
    <ligand>
        <name>Mg(2+)</name>
        <dbReference type="ChEBI" id="CHEBI:18420"/>
    </ligand>
</feature>
<feature type="binding site" evidence="1">
    <location>
        <position position="244"/>
    </location>
    <ligand>
        <name>Mg(2+)</name>
        <dbReference type="ChEBI" id="CHEBI:18420"/>
    </ligand>
</feature>
<feature type="binding site" evidence="1">
    <location>
        <position position="246"/>
    </location>
    <ligand>
        <name>Mg(2+)</name>
        <dbReference type="ChEBI" id="CHEBI:18420"/>
    </ligand>
</feature>
<feature type="modified residue" description="Phosphoserine" evidence="1">
    <location>
        <position position="103"/>
    </location>
</feature>
<name>GLMM_VIBVY</name>
<keyword id="KW-0413">Isomerase</keyword>
<keyword id="KW-0460">Magnesium</keyword>
<keyword id="KW-0479">Metal-binding</keyword>
<keyword id="KW-0597">Phosphoprotein</keyword>
<dbReference type="EC" id="5.4.2.10" evidence="1"/>
<dbReference type="EMBL" id="BA000037">
    <property type="protein sequence ID" value="BAC95477.1"/>
    <property type="molecule type" value="Genomic_DNA"/>
</dbReference>
<dbReference type="RefSeq" id="WP_011151082.1">
    <property type="nucleotide sequence ID" value="NC_005139.1"/>
</dbReference>
<dbReference type="SMR" id="Q7MI04"/>
<dbReference type="STRING" id="672.VV93_v1c24290"/>
<dbReference type="KEGG" id="vvy:VV2713"/>
<dbReference type="eggNOG" id="COG1109">
    <property type="taxonomic scope" value="Bacteria"/>
</dbReference>
<dbReference type="HOGENOM" id="CLU_016950_7_0_6"/>
<dbReference type="Proteomes" id="UP000002675">
    <property type="component" value="Chromosome I"/>
</dbReference>
<dbReference type="GO" id="GO:0005829">
    <property type="term" value="C:cytosol"/>
    <property type="evidence" value="ECO:0007669"/>
    <property type="project" value="TreeGrafter"/>
</dbReference>
<dbReference type="GO" id="GO:0000287">
    <property type="term" value="F:magnesium ion binding"/>
    <property type="evidence" value="ECO:0007669"/>
    <property type="project" value="UniProtKB-UniRule"/>
</dbReference>
<dbReference type="GO" id="GO:0008966">
    <property type="term" value="F:phosphoglucosamine mutase activity"/>
    <property type="evidence" value="ECO:0007669"/>
    <property type="project" value="UniProtKB-UniRule"/>
</dbReference>
<dbReference type="GO" id="GO:0004615">
    <property type="term" value="F:phosphomannomutase activity"/>
    <property type="evidence" value="ECO:0007669"/>
    <property type="project" value="TreeGrafter"/>
</dbReference>
<dbReference type="GO" id="GO:0005975">
    <property type="term" value="P:carbohydrate metabolic process"/>
    <property type="evidence" value="ECO:0007669"/>
    <property type="project" value="InterPro"/>
</dbReference>
<dbReference type="GO" id="GO:0009252">
    <property type="term" value="P:peptidoglycan biosynthetic process"/>
    <property type="evidence" value="ECO:0007669"/>
    <property type="project" value="TreeGrafter"/>
</dbReference>
<dbReference type="GO" id="GO:0006048">
    <property type="term" value="P:UDP-N-acetylglucosamine biosynthetic process"/>
    <property type="evidence" value="ECO:0007669"/>
    <property type="project" value="TreeGrafter"/>
</dbReference>
<dbReference type="CDD" id="cd05802">
    <property type="entry name" value="GlmM"/>
    <property type="match status" value="1"/>
</dbReference>
<dbReference type="FunFam" id="3.30.310.50:FF:000001">
    <property type="entry name" value="Phosphoglucosamine mutase"/>
    <property type="match status" value="1"/>
</dbReference>
<dbReference type="FunFam" id="3.40.120.10:FF:000001">
    <property type="entry name" value="Phosphoglucosamine mutase"/>
    <property type="match status" value="1"/>
</dbReference>
<dbReference type="FunFam" id="3.40.120.10:FF:000003">
    <property type="entry name" value="Phosphoglucosamine mutase"/>
    <property type="match status" value="1"/>
</dbReference>
<dbReference type="Gene3D" id="3.40.120.10">
    <property type="entry name" value="Alpha-D-Glucose-1,6-Bisphosphate, subunit A, domain 3"/>
    <property type="match status" value="3"/>
</dbReference>
<dbReference type="Gene3D" id="3.30.310.50">
    <property type="entry name" value="Alpha-D-phosphohexomutase, C-terminal domain"/>
    <property type="match status" value="1"/>
</dbReference>
<dbReference type="HAMAP" id="MF_01554_B">
    <property type="entry name" value="GlmM_B"/>
    <property type="match status" value="1"/>
</dbReference>
<dbReference type="InterPro" id="IPR005844">
    <property type="entry name" value="A-D-PHexomutase_a/b/a-I"/>
</dbReference>
<dbReference type="InterPro" id="IPR016055">
    <property type="entry name" value="A-D-PHexomutase_a/b/a-I/II/III"/>
</dbReference>
<dbReference type="InterPro" id="IPR005845">
    <property type="entry name" value="A-D-PHexomutase_a/b/a-II"/>
</dbReference>
<dbReference type="InterPro" id="IPR005846">
    <property type="entry name" value="A-D-PHexomutase_a/b/a-III"/>
</dbReference>
<dbReference type="InterPro" id="IPR005843">
    <property type="entry name" value="A-D-PHexomutase_C"/>
</dbReference>
<dbReference type="InterPro" id="IPR036900">
    <property type="entry name" value="A-D-PHexomutase_C_sf"/>
</dbReference>
<dbReference type="InterPro" id="IPR016066">
    <property type="entry name" value="A-D-PHexomutase_CS"/>
</dbReference>
<dbReference type="InterPro" id="IPR005841">
    <property type="entry name" value="Alpha-D-phosphohexomutase_SF"/>
</dbReference>
<dbReference type="InterPro" id="IPR006352">
    <property type="entry name" value="GlmM_bact"/>
</dbReference>
<dbReference type="InterPro" id="IPR050060">
    <property type="entry name" value="Phosphoglucosamine_mutase"/>
</dbReference>
<dbReference type="NCBIfam" id="TIGR01455">
    <property type="entry name" value="glmM"/>
    <property type="match status" value="1"/>
</dbReference>
<dbReference type="NCBIfam" id="NF008139">
    <property type="entry name" value="PRK10887.1"/>
    <property type="match status" value="1"/>
</dbReference>
<dbReference type="PANTHER" id="PTHR42946:SF1">
    <property type="entry name" value="PHOSPHOGLUCOMUTASE (ALPHA-D-GLUCOSE-1,6-BISPHOSPHATE-DEPENDENT)"/>
    <property type="match status" value="1"/>
</dbReference>
<dbReference type="PANTHER" id="PTHR42946">
    <property type="entry name" value="PHOSPHOHEXOSE MUTASE"/>
    <property type="match status" value="1"/>
</dbReference>
<dbReference type="Pfam" id="PF02878">
    <property type="entry name" value="PGM_PMM_I"/>
    <property type="match status" value="1"/>
</dbReference>
<dbReference type="Pfam" id="PF02879">
    <property type="entry name" value="PGM_PMM_II"/>
    <property type="match status" value="1"/>
</dbReference>
<dbReference type="Pfam" id="PF02880">
    <property type="entry name" value="PGM_PMM_III"/>
    <property type="match status" value="1"/>
</dbReference>
<dbReference type="Pfam" id="PF00408">
    <property type="entry name" value="PGM_PMM_IV"/>
    <property type="match status" value="1"/>
</dbReference>
<dbReference type="PRINTS" id="PR00509">
    <property type="entry name" value="PGMPMM"/>
</dbReference>
<dbReference type="SUPFAM" id="SSF55957">
    <property type="entry name" value="Phosphoglucomutase, C-terminal domain"/>
    <property type="match status" value="1"/>
</dbReference>
<dbReference type="SUPFAM" id="SSF53738">
    <property type="entry name" value="Phosphoglucomutase, first 3 domains"/>
    <property type="match status" value="3"/>
</dbReference>
<dbReference type="PROSITE" id="PS00710">
    <property type="entry name" value="PGM_PMM"/>
    <property type="match status" value="1"/>
</dbReference>
<comment type="function">
    <text evidence="1">Catalyzes the conversion of glucosamine-6-phosphate to glucosamine-1-phosphate.</text>
</comment>
<comment type="catalytic activity">
    <reaction evidence="1">
        <text>alpha-D-glucosamine 1-phosphate = D-glucosamine 6-phosphate</text>
        <dbReference type="Rhea" id="RHEA:23424"/>
        <dbReference type="ChEBI" id="CHEBI:58516"/>
        <dbReference type="ChEBI" id="CHEBI:58725"/>
        <dbReference type="EC" id="5.4.2.10"/>
    </reaction>
</comment>
<comment type="cofactor">
    <cofactor evidence="1">
        <name>Mg(2+)</name>
        <dbReference type="ChEBI" id="CHEBI:18420"/>
    </cofactor>
    <text evidence="1">Binds 1 Mg(2+) ion per subunit.</text>
</comment>
<comment type="PTM">
    <text evidence="1">Activated by phosphorylation.</text>
</comment>
<comment type="similarity">
    <text evidence="1">Belongs to the phosphohexose mutase family.</text>
</comment>
<gene>
    <name evidence="1" type="primary">glmM</name>
    <name type="ordered locus">VV2713</name>
</gene>
<organism>
    <name type="scientific">Vibrio vulnificus (strain YJ016)</name>
    <dbReference type="NCBI Taxonomy" id="196600"/>
    <lineage>
        <taxon>Bacteria</taxon>
        <taxon>Pseudomonadati</taxon>
        <taxon>Pseudomonadota</taxon>
        <taxon>Gammaproteobacteria</taxon>
        <taxon>Vibrionales</taxon>
        <taxon>Vibrionaceae</taxon>
        <taxon>Vibrio</taxon>
    </lineage>
</organism>
<evidence type="ECO:0000255" key="1">
    <source>
        <dbReference type="HAMAP-Rule" id="MF_01554"/>
    </source>
</evidence>
<reference key="1">
    <citation type="journal article" date="2003" name="Genome Res.">
        <title>Comparative genome analysis of Vibrio vulnificus, a marine pathogen.</title>
        <authorList>
            <person name="Chen C.-Y."/>
            <person name="Wu K.-M."/>
            <person name="Chang Y.-C."/>
            <person name="Chang C.-H."/>
            <person name="Tsai H.-C."/>
            <person name="Liao T.-L."/>
            <person name="Liu Y.-M."/>
            <person name="Chen H.-J."/>
            <person name="Shen A.B.-T."/>
            <person name="Li J.-C."/>
            <person name="Su T.-L."/>
            <person name="Shao C.-P."/>
            <person name="Lee C.-T."/>
            <person name="Hor L.-I."/>
            <person name="Tsai S.-F."/>
        </authorList>
    </citation>
    <scope>NUCLEOTIDE SEQUENCE [LARGE SCALE GENOMIC DNA]</scope>
    <source>
        <strain>YJ016</strain>
    </source>
</reference>
<accession>Q7MI04</accession>
<protein>
    <recommendedName>
        <fullName evidence="1">Phosphoglucosamine mutase</fullName>
        <ecNumber evidence="1">5.4.2.10</ecNumber>
    </recommendedName>
</protein>